<protein>
    <recommendedName>
        <fullName evidence="1">Small ribosomal subunit protein uS4</fullName>
    </recommendedName>
    <alternativeName>
        <fullName evidence="2">30S ribosomal protein S4</fullName>
    </alternativeName>
</protein>
<evidence type="ECO:0000255" key="1">
    <source>
        <dbReference type="HAMAP-Rule" id="MF_01306"/>
    </source>
</evidence>
<evidence type="ECO:0000305" key="2"/>
<sequence>MGRYTGPTCRLCRREGMKLYLKGDKCYTDKCPFARRGYAPGQHGQEKKKLTNYGMQLREKQKLKRYYGVLERQFERLYEEAERMKGITGENLLQLLERRLDNVVFRLGFAASRPQARQLVSHGHIEVNGKKVDIPSFLVKPGDVISVREKSRSMELIKNNLEVSRNVPDWLELNKDAFEGRVVSLPRREHIDLPIQEHLIVELYSK</sequence>
<reference key="1">
    <citation type="submission" date="2008-01" db="EMBL/GenBank/DDBJ databases">
        <title>Complete sequence of Thermoanaerobacter pseudethanolicus 39E.</title>
        <authorList>
            <person name="Copeland A."/>
            <person name="Lucas S."/>
            <person name="Lapidus A."/>
            <person name="Barry K."/>
            <person name="Glavina del Rio T."/>
            <person name="Dalin E."/>
            <person name="Tice H."/>
            <person name="Pitluck S."/>
            <person name="Bruce D."/>
            <person name="Goodwin L."/>
            <person name="Saunders E."/>
            <person name="Brettin T."/>
            <person name="Detter J.C."/>
            <person name="Han C."/>
            <person name="Schmutz J."/>
            <person name="Larimer F."/>
            <person name="Land M."/>
            <person name="Hauser L."/>
            <person name="Kyrpides N."/>
            <person name="Lykidis A."/>
            <person name="Hemme C."/>
            <person name="Fields M.W."/>
            <person name="He Z."/>
            <person name="Zhou J."/>
            <person name="Richardson P."/>
        </authorList>
    </citation>
    <scope>NUCLEOTIDE SEQUENCE [LARGE SCALE GENOMIC DNA]</scope>
    <source>
        <strain>ATCC 33223 / DSM 2355 / 39E</strain>
    </source>
</reference>
<organism>
    <name type="scientific">Thermoanaerobacter pseudethanolicus (strain ATCC 33223 / 39E)</name>
    <name type="common">Clostridium thermohydrosulfuricum</name>
    <dbReference type="NCBI Taxonomy" id="340099"/>
    <lineage>
        <taxon>Bacteria</taxon>
        <taxon>Bacillati</taxon>
        <taxon>Bacillota</taxon>
        <taxon>Clostridia</taxon>
        <taxon>Thermoanaerobacterales</taxon>
        <taxon>Thermoanaerobacteraceae</taxon>
        <taxon>Thermoanaerobacter</taxon>
    </lineage>
</organism>
<dbReference type="EMBL" id="CP000924">
    <property type="protein sequence ID" value="ABY94070.1"/>
    <property type="molecule type" value="Genomic_DNA"/>
</dbReference>
<dbReference type="RefSeq" id="WP_003868586.1">
    <property type="nucleotide sequence ID" value="NC_010321.1"/>
</dbReference>
<dbReference type="SMR" id="B0KCM7"/>
<dbReference type="STRING" id="340099.Teth39_0401"/>
<dbReference type="KEGG" id="tpd:Teth39_0401"/>
<dbReference type="eggNOG" id="COG0522">
    <property type="taxonomic scope" value="Bacteria"/>
</dbReference>
<dbReference type="HOGENOM" id="CLU_092403_0_2_9"/>
<dbReference type="Proteomes" id="UP000002156">
    <property type="component" value="Chromosome"/>
</dbReference>
<dbReference type="GO" id="GO:0015935">
    <property type="term" value="C:small ribosomal subunit"/>
    <property type="evidence" value="ECO:0007669"/>
    <property type="project" value="InterPro"/>
</dbReference>
<dbReference type="GO" id="GO:0019843">
    <property type="term" value="F:rRNA binding"/>
    <property type="evidence" value="ECO:0007669"/>
    <property type="project" value="UniProtKB-UniRule"/>
</dbReference>
<dbReference type="GO" id="GO:0003735">
    <property type="term" value="F:structural constituent of ribosome"/>
    <property type="evidence" value="ECO:0007669"/>
    <property type="project" value="InterPro"/>
</dbReference>
<dbReference type="GO" id="GO:0042274">
    <property type="term" value="P:ribosomal small subunit biogenesis"/>
    <property type="evidence" value="ECO:0007669"/>
    <property type="project" value="TreeGrafter"/>
</dbReference>
<dbReference type="GO" id="GO:0006412">
    <property type="term" value="P:translation"/>
    <property type="evidence" value="ECO:0007669"/>
    <property type="project" value="UniProtKB-UniRule"/>
</dbReference>
<dbReference type="CDD" id="cd00165">
    <property type="entry name" value="S4"/>
    <property type="match status" value="1"/>
</dbReference>
<dbReference type="FunFam" id="1.10.1050.10:FF:000001">
    <property type="entry name" value="30S ribosomal protein S4"/>
    <property type="match status" value="1"/>
</dbReference>
<dbReference type="FunFam" id="3.10.290.10:FF:000001">
    <property type="entry name" value="30S ribosomal protein S4"/>
    <property type="match status" value="1"/>
</dbReference>
<dbReference type="Gene3D" id="1.10.1050.10">
    <property type="entry name" value="Ribosomal Protein S4 Delta 41, Chain A, domain 1"/>
    <property type="match status" value="1"/>
</dbReference>
<dbReference type="Gene3D" id="3.10.290.10">
    <property type="entry name" value="RNA-binding S4 domain"/>
    <property type="match status" value="1"/>
</dbReference>
<dbReference type="HAMAP" id="MF_01306_B">
    <property type="entry name" value="Ribosomal_uS4_B"/>
    <property type="match status" value="1"/>
</dbReference>
<dbReference type="InterPro" id="IPR022801">
    <property type="entry name" value="Ribosomal_uS4"/>
</dbReference>
<dbReference type="InterPro" id="IPR005709">
    <property type="entry name" value="Ribosomal_uS4_bac-type"/>
</dbReference>
<dbReference type="InterPro" id="IPR018079">
    <property type="entry name" value="Ribosomal_uS4_CS"/>
</dbReference>
<dbReference type="InterPro" id="IPR001912">
    <property type="entry name" value="Ribosomal_uS4_N"/>
</dbReference>
<dbReference type="InterPro" id="IPR002942">
    <property type="entry name" value="S4_RNA-bd"/>
</dbReference>
<dbReference type="InterPro" id="IPR036986">
    <property type="entry name" value="S4_RNA-bd_sf"/>
</dbReference>
<dbReference type="NCBIfam" id="NF003717">
    <property type="entry name" value="PRK05327.1"/>
    <property type="match status" value="1"/>
</dbReference>
<dbReference type="NCBIfam" id="TIGR01017">
    <property type="entry name" value="rpsD_bact"/>
    <property type="match status" value="1"/>
</dbReference>
<dbReference type="PANTHER" id="PTHR11831">
    <property type="entry name" value="30S 40S RIBOSOMAL PROTEIN"/>
    <property type="match status" value="1"/>
</dbReference>
<dbReference type="PANTHER" id="PTHR11831:SF4">
    <property type="entry name" value="SMALL RIBOSOMAL SUBUNIT PROTEIN US4M"/>
    <property type="match status" value="1"/>
</dbReference>
<dbReference type="Pfam" id="PF00163">
    <property type="entry name" value="Ribosomal_S4"/>
    <property type="match status" value="1"/>
</dbReference>
<dbReference type="Pfam" id="PF01479">
    <property type="entry name" value="S4"/>
    <property type="match status" value="1"/>
</dbReference>
<dbReference type="SMART" id="SM01390">
    <property type="entry name" value="Ribosomal_S4"/>
    <property type="match status" value="1"/>
</dbReference>
<dbReference type="SMART" id="SM00363">
    <property type="entry name" value="S4"/>
    <property type="match status" value="1"/>
</dbReference>
<dbReference type="SUPFAM" id="SSF55174">
    <property type="entry name" value="Alpha-L RNA-binding motif"/>
    <property type="match status" value="1"/>
</dbReference>
<dbReference type="PROSITE" id="PS00632">
    <property type="entry name" value="RIBOSOMAL_S4"/>
    <property type="match status" value="1"/>
</dbReference>
<dbReference type="PROSITE" id="PS50889">
    <property type="entry name" value="S4"/>
    <property type="match status" value="1"/>
</dbReference>
<comment type="function">
    <text evidence="1">One of the primary rRNA binding proteins, it binds directly to 16S rRNA where it nucleates assembly of the body of the 30S subunit.</text>
</comment>
<comment type="function">
    <text evidence="1">With S5 and S12 plays an important role in translational accuracy.</text>
</comment>
<comment type="subunit">
    <text evidence="1">Part of the 30S ribosomal subunit. Contacts protein S5. The interaction surface between S4 and S5 is involved in control of translational fidelity.</text>
</comment>
<comment type="similarity">
    <text evidence="1">Belongs to the universal ribosomal protein uS4 family.</text>
</comment>
<proteinExistence type="inferred from homology"/>
<name>RS4_THEP3</name>
<keyword id="KW-1185">Reference proteome</keyword>
<keyword id="KW-0687">Ribonucleoprotein</keyword>
<keyword id="KW-0689">Ribosomal protein</keyword>
<keyword id="KW-0694">RNA-binding</keyword>
<keyword id="KW-0699">rRNA-binding</keyword>
<feature type="chain" id="PRO_1000140808" description="Small ribosomal subunit protein uS4">
    <location>
        <begin position="1"/>
        <end position="206"/>
    </location>
</feature>
<feature type="domain" description="S4 RNA-binding" evidence="1">
    <location>
        <begin position="98"/>
        <end position="158"/>
    </location>
</feature>
<gene>
    <name evidence="1" type="primary">rpsD</name>
    <name type="ordered locus">Teth39_0401</name>
</gene>
<accession>B0KCM7</accession>